<evidence type="ECO:0000255" key="1">
    <source>
        <dbReference type="HAMAP-Rule" id="MF_01390"/>
    </source>
</evidence>
<keyword id="KW-0150">Chloroplast</keyword>
<keyword id="KW-0507">mRNA processing</keyword>
<keyword id="KW-0934">Plastid</keyword>
<keyword id="KW-0694">RNA-binding</keyword>
<keyword id="KW-0819">tRNA processing</keyword>
<geneLocation type="chloroplast"/>
<sequence>MEELQGYLEKDRSRQQHFLYPLLFQEYIYALAHNHGLNGSIFYEPVEVFGYDNKSSLVLVKRLITRIYQQNFLISLVNDSNQNRFVGYNHNNFFFSHFHSQMISESFAIIVEIPFSLRLVSYFEEKEIPKYHNLRSIHSIFPFLEDKLSHLNYVSDILIPHPIHMEILVQILQCWIQDVPFLHLLRFFLHEYHNLNSLLITQKKSIYVFSKENKRLFRFLYNSYVFEWEFLLVFIRKQFSYLRLTSYGTFLERTHFYEKIEHLQIKDFVVVCRNYFHRTLWFCKDPFMHYVRYQGKAILASKGTHLLMKKWKYHFFNFWQYYFHVWSQPYRIHINQLSNYSFYFLGYLSSLLLHFSAVRNQMLENSFLINTITKKFDTIVPVIFLIGSLAKAKFCTVSGHPISKPIWTDLSDSDILNRFGRICRNLSHYHSGSSKKQGLYRIKYILRLSCARTLARKHKSTVRTFLRRLGSGLLEEFFTEEEQVLSLIFPKTTPFFLHGSHRERIWYLDIIRINDLVNHS</sequence>
<dbReference type="EMBL" id="AB029780">
    <property type="protein sequence ID" value="BAA83287.1"/>
    <property type="molecule type" value="Genomic_DNA"/>
</dbReference>
<dbReference type="RefSeq" id="YP_010498769.1">
    <property type="nucleotide sequence ID" value="NC_066799.1"/>
</dbReference>
<dbReference type="GeneID" id="75325929"/>
<dbReference type="GO" id="GO:0009507">
    <property type="term" value="C:chloroplast"/>
    <property type="evidence" value="ECO:0007669"/>
    <property type="project" value="UniProtKB-SubCell"/>
</dbReference>
<dbReference type="GO" id="GO:0003723">
    <property type="term" value="F:RNA binding"/>
    <property type="evidence" value="ECO:0007669"/>
    <property type="project" value="UniProtKB-KW"/>
</dbReference>
<dbReference type="GO" id="GO:0006397">
    <property type="term" value="P:mRNA processing"/>
    <property type="evidence" value="ECO:0007669"/>
    <property type="project" value="UniProtKB-KW"/>
</dbReference>
<dbReference type="GO" id="GO:0008380">
    <property type="term" value="P:RNA splicing"/>
    <property type="evidence" value="ECO:0007669"/>
    <property type="project" value="UniProtKB-UniRule"/>
</dbReference>
<dbReference type="GO" id="GO:0008033">
    <property type="term" value="P:tRNA processing"/>
    <property type="evidence" value="ECO:0007669"/>
    <property type="project" value="UniProtKB-KW"/>
</dbReference>
<dbReference type="HAMAP" id="MF_01390">
    <property type="entry name" value="MatK"/>
    <property type="match status" value="1"/>
</dbReference>
<dbReference type="InterPro" id="IPR024937">
    <property type="entry name" value="Domain_X"/>
</dbReference>
<dbReference type="InterPro" id="IPR002866">
    <property type="entry name" value="Maturase_MatK"/>
</dbReference>
<dbReference type="InterPro" id="IPR024942">
    <property type="entry name" value="Maturase_MatK_N"/>
</dbReference>
<dbReference type="PANTHER" id="PTHR34811">
    <property type="entry name" value="MATURASE K"/>
    <property type="match status" value="1"/>
</dbReference>
<dbReference type="PANTHER" id="PTHR34811:SF1">
    <property type="entry name" value="MATURASE K"/>
    <property type="match status" value="1"/>
</dbReference>
<dbReference type="Pfam" id="PF01348">
    <property type="entry name" value="Intron_maturas2"/>
    <property type="match status" value="1"/>
</dbReference>
<dbReference type="Pfam" id="PF01824">
    <property type="entry name" value="MatK_N"/>
    <property type="match status" value="1"/>
</dbReference>
<name>MATK_ASPEL</name>
<organism>
    <name type="scientific">Aspidistra elatior</name>
    <name type="common">Cast-iron plant</name>
    <name type="synonym">Barroom plant</name>
    <dbReference type="NCBI Taxonomy" id="39526"/>
    <lineage>
        <taxon>Eukaryota</taxon>
        <taxon>Viridiplantae</taxon>
        <taxon>Streptophyta</taxon>
        <taxon>Embryophyta</taxon>
        <taxon>Tracheophyta</taxon>
        <taxon>Spermatophyta</taxon>
        <taxon>Magnoliopsida</taxon>
        <taxon>Liliopsida</taxon>
        <taxon>Asparagales</taxon>
        <taxon>Asparagaceae</taxon>
        <taxon>Nolinoideae</taxon>
        <taxon>Aspidistra</taxon>
    </lineage>
</organism>
<protein>
    <recommendedName>
        <fullName evidence="1">Maturase K</fullName>
    </recommendedName>
    <alternativeName>
        <fullName evidence="1">Intron maturase</fullName>
    </alternativeName>
</protein>
<proteinExistence type="inferred from homology"/>
<reference key="1">
    <citation type="book" date="2000" name="Monocots: systematics and evolution">
        <title>Molecular phylogeny of the Convallariaceae (Asparagales).</title>
        <editorList>
            <person name="Wilson K.L."/>
            <person name="Morrison D.A."/>
        </editorList>
        <authorList>
            <person name="Yamashita J."/>
            <person name="Tamura M.N."/>
        </authorList>
    </citation>
    <scope>NUCLEOTIDE SEQUENCE [GENOMIC DNA]</scope>
</reference>
<gene>
    <name evidence="1" type="primary">matK</name>
</gene>
<feature type="chain" id="PRO_0000143262" description="Maturase K">
    <location>
        <begin position="1"/>
        <end position="520"/>
    </location>
</feature>
<accession>Q9TNA5</accession>
<comment type="function">
    <text evidence="1">Usually encoded in the trnK tRNA gene intron. Probably assists in splicing its own and other chloroplast group II introns.</text>
</comment>
<comment type="subcellular location">
    <subcellularLocation>
        <location>Plastid</location>
        <location>Chloroplast</location>
    </subcellularLocation>
</comment>
<comment type="similarity">
    <text evidence="1">Belongs to the intron maturase 2 family. MatK subfamily.</text>
</comment>